<sequence length="61" mass="6871">MAKKSMIAKAARAPKFKVRGYTRCQICGRPHSVYKDFGICRVCLRKMANEGLIPGLKKASW</sequence>
<name>RS14Z_CAMC5</name>
<organism>
    <name type="scientific">Campylobacter curvus (strain 525.92)</name>
    <dbReference type="NCBI Taxonomy" id="360105"/>
    <lineage>
        <taxon>Bacteria</taxon>
        <taxon>Pseudomonadati</taxon>
        <taxon>Campylobacterota</taxon>
        <taxon>Epsilonproteobacteria</taxon>
        <taxon>Campylobacterales</taxon>
        <taxon>Campylobacteraceae</taxon>
        <taxon>Campylobacter</taxon>
    </lineage>
</organism>
<evidence type="ECO:0000255" key="1">
    <source>
        <dbReference type="HAMAP-Rule" id="MF_01364"/>
    </source>
</evidence>
<evidence type="ECO:0000305" key="2"/>
<proteinExistence type="inferred from homology"/>
<keyword id="KW-0479">Metal-binding</keyword>
<keyword id="KW-1185">Reference proteome</keyword>
<keyword id="KW-0687">Ribonucleoprotein</keyword>
<keyword id="KW-0689">Ribosomal protein</keyword>
<keyword id="KW-0694">RNA-binding</keyword>
<keyword id="KW-0699">rRNA-binding</keyword>
<keyword id="KW-0862">Zinc</keyword>
<dbReference type="EMBL" id="CP000767">
    <property type="protein sequence ID" value="EAT99613.1"/>
    <property type="molecule type" value="Genomic_DNA"/>
</dbReference>
<dbReference type="RefSeq" id="WP_009649734.1">
    <property type="nucleotide sequence ID" value="NC_009715.2"/>
</dbReference>
<dbReference type="SMR" id="A7H0Z9"/>
<dbReference type="STRING" id="360105.CCV52592_1020"/>
<dbReference type="KEGG" id="ccv:CCV52592_1020"/>
<dbReference type="HOGENOM" id="CLU_139869_3_0_7"/>
<dbReference type="OrthoDB" id="9810484at2"/>
<dbReference type="Proteomes" id="UP000006380">
    <property type="component" value="Chromosome"/>
</dbReference>
<dbReference type="GO" id="GO:0005737">
    <property type="term" value="C:cytoplasm"/>
    <property type="evidence" value="ECO:0007669"/>
    <property type="project" value="UniProtKB-ARBA"/>
</dbReference>
<dbReference type="GO" id="GO:0015935">
    <property type="term" value="C:small ribosomal subunit"/>
    <property type="evidence" value="ECO:0007669"/>
    <property type="project" value="TreeGrafter"/>
</dbReference>
<dbReference type="GO" id="GO:0019843">
    <property type="term" value="F:rRNA binding"/>
    <property type="evidence" value="ECO:0007669"/>
    <property type="project" value="UniProtKB-UniRule"/>
</dbReference>
<dbReference type="GO" id="GO:0003735">
    <property type="term" value="F:structural constituent of ribosome"/>
    <property type="evidence" value="ECO:0007669"/>
    <property type="project" value="InterPro"/>
</dbReference>
<dbReference type="GO" id="GO:0008270">
    <property type="term" value="F:zinc ion binding"/>
    <property type="evidence" value="ECO:0007669"/>
    <property type="project" value="UniProtKB-UniRule"/>
</dbReference>
<dbReference type="GO" id="GO:0006412">
    <property type="term" value="P:translation"/>
    <property type="evidence" value="ECO:0007669"/>
    <property type="project" value="UniProtKB-UniRule"/>
</dbReference>
<dbReference type="FunFam" id="4.10.830.10:FF:000001">
    <property type="entry name" value="30S ribosomal protein S14 type Z"/>
    <property type="match status" value="1"/>
</dbReference>
<dbReference type="Gene3D" id="4.10.830.10">
    <property type="entry name" value="30s Ribosomal Protein S14, Chain N"/>
    <property type="match status" value="1"/>
</dbReference>
<dbReference type="HAMAP" id="MF_01364_B">
    <property type="entry name" value="Ribosomal_uS14_2_B"/>
    <property type="match status" value="1"/>
</dbReference>
<dbReference type="InterPro" id="IPR001209">
    <property type="entry name" value="Ribosomal_uS14"/>
</dbReference>
<dbReference type="InterPro" id="IPR023053">
    <property type="entry name" value="Ribosomal_uS14_bact"/>
</dbReference>
<dbReference type="InterPro" id="IPR018271">
    <property type="entry name" value="Ribosomal_uS14_CS"/>
</dbReference>
<dbReference type="InterPro" id="IPR043140">
    <property type="entry name" value="Ribosomal_uS14_sf"/>
</dbReference>
<dbReference type="NCBIfam" id="NF005974">
    <property type="entry name" value="PRK08061.1"/>
    <property type="match status" value="1"/>
</dbReference>
<dbReference type="PANTHER" id="PTHR19836">
    <property type="entry name" value="30S RIBOSOMAL PROTEIN S14"/>
    <property type="match status" value="1"/>
</dbReference>
<dbReference type="PANTHER" id="PTHR19836:SF19">
    <property type="entry name" value="SMALL RIBOSOMAL SUBUNIT PROTEIN US14M"/>
    <property type="match status" value="1"/>
</dbReference>
<dbReference type="Pfam" id="PF00253">
    <property type="entry name" value="Ribosomal_S14"/>
    <property type="match status" value="1"/>
</dbReference>
<dbReference type="SUPFAM" id="SSF57716">
    <property type="entry name" value="Glucocorticoid receptor-like (DNA-binding domain)"/>
    <property type="match status" value="1"/>
</dbReference>
<dbReference type="PROSITE" id="PS00527">
    <property type="entry name" value="RIBOSOMAL_S14"/>
    <property type="match status" value="1"/>
</dbReference>
<comment type="function">
    <text evidence="1">Binds 16S rRNA, required for the assembly of 30S particles and may also be responsible for determining the conformation of the 16S rRNA at the A site.</text>
</comment>
<comment type="cofactor">
    <cofactor evidence="1">
        <name>Zn(2+)</name>
        <dbReference type="ChEBI" id="CHEBI:29105"/>
    </cofactor>
    <text evidence="1">Binds 1 zinc ion per subunit.</text>
</comment>
<comment type="subunit">
    <text evidence="1">Part of the 30S ribosomal subunit. Contacts proteins S3 and S10.</text>
</comment>
<comment type="similarity">
    <text evidence="1">Belongs to the universal ribosomal protein uS14 family. Zinc-binding uS14 subfamily.</text>
</comment>
<feature type="chain" id="PRO_1000067929" description="Small ribosomal subunit protein uS14">
    <location>
        <begin position="1"/>
        <end position="61"/>
    </location>
</feature>
<feature type="binding site" evidence="1">
    <location>
        <position position="24"/>
    </location>
    <ligand>
        <name>Zn(2+)</name>
        <dbReference type="ChEBI" id="CHEBI:29105"/>
    </ligand>
</feature>
<feature type="binding site" evidence="1">
    <location>
        <position position="27"/>
    </location>
    <ligand>
        <name>Zn(2+)</name>
        <dbReference type="ChEBI" id="CHEBI:29105"/>
    </ligand>
</feature>
<feature type="binding site" evidence="1">
    <location>
        <position position="40"/>
    </location>
    <ligand>
        <name>Zn(2+)</name>
        <dbReference type="ChEBI" id="CHEBI:29105"/>
    </ligand>
</feature>
<feature type="binding site" evidence="1">
    <location>
        <position position="43"/>
    </location>
    <ligand>
        <name>Zn(2+)</name>
        <dbReference type="ChEBI" id="CHEBI:29105"/>
    </ligand>
</feature>
<protein>
    <recommendedName>
        <fullName evidence="1">Small ribosomal subunit protein uS14</fullName>
    </recommendedName>
    <alternativeName>
        <fullName evidence="2">30S ribosomal protein S14 type Z</fullName>
    </alternativeName>
</protein>
<accession>A7H0Z9</accession>
<gene>
    <name evidence="1" type="primary">rpsZ</name>
    <name evidence="1" type="synonym">rpsN</name>
    <name type="ordered locus">Ccur92_18370</name>
    <name type="ORF">CCV52592_1020</name>
</gene>
<reference key="1">
    <citation type="submission" date="2007-07" db="EMBL/GenBank/DDBJ databases">
        <title>Genome sequence of Campylobacter curvus 525.92 isolated from human feces.</title>
        <authorList>
            <person name="Fouts D.E."/>
            <person name="Mongodin E.F."/>
            <person name="Puiu D."/>
            <person name="Sebastian Y."/>
            <person name="Miller W.G."/>
            <person name="Mandrell R.E."/>
            <person name="Lastovica A.J."/>
            <person name="Nelson K.E."/>
        </authorList>
    </citation>
    <scope>NUCLEOTIDE SEQUENCE [LARGE SCALE GENOMIC DNA]</scope>
    <source>
        <strain>525.92</strain>
    </source>
</reference>